<protein>
    <recommendedName>
        <fullName evidence="1">Photosystem II reaction center protein L</fullName>
        <shortName evidence="1">PSII-L</shortName>
    </recommendedName>
</protein>
<dbReference type="EMBL" id="AY100947">
    <property type="protein sequence ID" value="AAM55907.1"/>
    <property type="molecule type" value="Genomic_DNA"/>
</dbReference>
<dbReference type="RefSeq" id="YP_010273545.1">
    <property type="nucleotide sequence ID" value="NC_060789.1"/>
</dbReference>
<dbReference type="SMR" id="Q7H833"/>
<dbReference type="GeneID" id="70630192"/>
<dbReference type="GO" id="GO:0009539">
    <property type="term" value="C:photosystem II reaction center"/>
    <property type="evidence" value="ECO:0007669"/>
    <property type="project" value="InterPro"/>
</dbReference>
<dbReference type="GO" id="GO:0042170">
    <property type="term" value="C:plastid membrane"/>
    <property type="evidence" value="ECO:0007669"/>
    <property type="project" value="UniProtKB-SubCell"/>
</dbReference>
<dbReference type="GO" id="GO:0042651">
    <property type="term" value="C:thylakoid membrane"/>
    <property type="evidence" value="ECO:0007669"/>
    <property type="project" value="UniProtKB-UniRule"/>
</dbReference>
<dbReference type="HAMAP" id="MF_01317">
    <property type="entry name" value="PSII_PsbL"/>
    <property type="match status" value="1"/>
</dbReference>
<dbReference type="InterPro" id="IPR003372">
    <property type="entry name" value="PSII_PsbL"/>
</dbReference>
<dbReference type="InterPro" id="IPR037266">
    <property type="entry name" value="PSII_PsbL_sf"/>
</dbReference>
<dbReference type="NCBIfam" id="NF001972">
    <property type="entry name" value="PRK00753.1"/>
    <property type="match status" value="1"/>
</dbReference>
<dbReference type="Pfam" id="PF02419">
    <property type="entry name" value="PsbL"/>
    <property type="match status" value="1"/>
</dbReference>
<dbReference type="SUPFAM" id="SSF161017">
    <property type="entry name" value="Photosystem II reaction center protein L, PsbL"/>
    <property type="match status" value="1"/>
</dbReference>
<gene>
    <name evidence="1" type="primary">psbL</name>
</gene>
<sequence>MTQSNPNEQNVELNRTSLYWGLLLIFVLAVLFSNYFFN</sequence>
<organism>
    <name type="scientific">Cuscuta japonica</name>
    <name type="common">Japanese dodder</name>
    <dbReference type="NCBI Taxonomy" id="81913"/>
    <lineage>
        <taxon>Eukaryota</taxon>
        <taxon>Viridiplantae</taxon>
        <taxon>Streptophyta</taxon>
        <taxon>Embryophyta</taxon>
        <taxon>Tracheophyta</taxon>
        <taxon>Spermatophyta</taxon>
        <taxon>Magnoliopsida</taxon>
        <taxon>eudicotyledons</taxon>
        <taxon>Gunneridae</taxon>
        <taxon>Pentapetalae</taxon>
        <taxon>asterids</taxon>
        <taxon>lamiids</taxon>
        <taxon>Solanales</taxon>
        <taxon>Convolvulaceae</taxon>
        <taxon>Cuscuteae</taxon>
        <taxon>Cuscuta</taxon>
        <taxon>Cuscuta subgen. Monogynella</taxon>
    </lineage>
</organism>
<reference key="1">
    <citation type="journal article" date="2002" name="Am. J. Bot.">
        <title>Monophyly of the Convolvulaceae and circumscription of their major lineages based on DNA sequences of multiple chloroplast loci.</title>
        <authorList>
            <person name="Stefanovic S."/>
            <person name="Krueger L."/>
            <person name="Olmstead R.G."/>
        </authorList>
        <dbReference type="AGRICOLA" id="IND23320510"/>
    </citation>
    <scope>NUCLEOTIDE SEQUENCE [GENOMIC DNA]</scope>
</reference>
<accession>Q7H833</accession>
<geneLocation type="plastid"/>
<proteinExistence type="inferred from homology"/>
<evidence type="ECO:0000255" key="1">
    <source>
        <dbReference type="HAMAP-Rule" id="MF_01317"/>
    </source>
</evidence>
<evidence type="ECO:0000305" key="2"/>
<comment type="function">
    <text evidence="1">One of the components of the core complex of photosystem II (PSII). PSII is a light-driven water:plastoquinone oxidoreductase that uses light energy to abstract electrons from H(2)O, generating O(2) and a proton gradient subsequently used for ATP formation. It consists of a core antenna complex that captures photons, and an electron transfer chain that converts photonic excitation into a charge separation. This subunit is found at the monomer-monomer interface and is required for correct PSII assembly and/or dimerization.</text>
</comment>
<comment type="subunit">
    <text evidence="1">PSII is composed of 1 copy each of membrane proteins PsbA, PsbB, PsbC, PsbD, PsbE, PsbF, PsbH, PsbI, PsbJ, PsbK, PsbL, PsbM, PsbT, PsbX, PsbY, PsbZ, Psb30/Ycf12, at least 3 peripheral proteins of the oxygen-evolving complex and a large number of cofactors. It forms dimeric complexes.</text>
</comment>
<comment type="subcellular location">
    <subcellularLocation>
        <location evidence="2">Plastid membrane</location>
        <topology evidence="1">Single-pass membrane protein</topology>
    </subcellularLocation>
</comment>
<comment type="similarity">
    <text evidence="1">Belongs to the PsbL family.</text>
</comment>
<comment type="caution">
    <text evidence="2">This organism being non-photosynthetic, the role of this protein is uncertain.</text>
</comment>
<name>PSBL_CUSJA</name>
<keyword id="KW-0472">Membrane</keyword>
<keyword id="KW-0934">Plastid</keyword>
<keyword id="KW-0812">Transmembrane</keyword>
<keyword id="KW-1133">Transmembrane helix</keyword>
<feature type="chain" id="PRO_0000306229" description="Photosystem II reaction center protein L">
    <location>
        <begin position="1"/>
        <end position="38"/>
    </location>
</feature>
<feature type="transmembrane region" description="Helical" evidence="1">
    <location>
        <begin position="17"/>
        <end position="37"/>
    </location>
</feature>